<feature type="chain" id="PRO_0000415989" description="Mini-ribonuclease 3">
    <location>
        <begin position="1"/>
        <end position="136"/>
    </location>
</feature>
<feature type="active site" evidence="1">
    <location>
        <position position="20"/>
    </location>
</feature>
<evidence type="ECO:0000255" key="1">
    <source>
        <dbReference type="HAMAP-Rule" id="MF_01468"/>
    </source>
</evidence>
<name>MRNC_LISMO</name>
<protein>
    <recommendedName>
        <fullName evidence="1">Mini-ribonuclease 3</fullName>
        <shortName evidence="1">Mini-3</shortName>
        <shortName evidence="1">Mini-RNase 3</shortName>
        <ecNumber evidence="1">3.1.26.-</ecNumber>
    </recommendedName>
    <alternativeName>
        <fullName evidence="1">Mini-RNase III</fullName>
        <shortName evidence="1">Mini-III</shortName>
    </alternativeName>
</protein>
<comment type="function">
    <text evidence="1">Involved in correct processing of both the 5' and 3' ends of 23S rRNA precursor. Processes 30S rRNA precursor transcript even in absence of ribonuclease 3 (Rnc); Rnc processes 30S rRNA into smaller rRNA precursors.</text>
</comment>
<comment type="cofactor">
    <cofactor evidence="1">
        <name>Mg(2+)</name>
        <dbReference type="ChEBI" id="CHEBI:18420"/>
    </cofactor>
</comment>
<comment type="subunit">
    <text evidence="1">Homodimer.</text>
</comment>
<comment type="subcellular location">
    <subcellularLocation>
        <location evidence="1">Cytoplasm</location>
    </subcellularLocation>
</comment>
<comment type="similarity">
    <text evidence="1">Belongs to the MrnC RNase family.</text>
</comment>
<accession>Q8YAB0</accession>
<proteinExistence type="inferred from homology"/>
<sequence length="136" mass="15224">MAEVKEYKQLNGLALAYMGDAVYEKFIREYLLAAGKTKPNQLHKTATKFVSAKGQAVALKAMIAEGFLTEEEDRIAKRGRNAKSYTVPKNTDPGTYSMSTSFEAVLGYLYLAGEMERLQEWMEKALEIVEKGVETN</sequence>
<keyword id="KW-0963">Cytoplasm</keyword>
<keyword id="KW-0255">Endonuclease</keyword>
<keyword id="KW-0378">Hydrolase</keyword>
<keyword id="KW-0460">Magnesium</keyword>
<keyword id="KW-0540">Nuclease</keyword>
<keyword id="KW-1185">Reference proteome</keyword>
<keyword id="KW-0690">Ribosome biogenesis</keyword>
<keyword id="KW-0694">RNA-binding</keyword>
<keyword id="KW-0698">rRNA processing</keyword>
<keyword id="KW-0699">rRNA-binding</keyword>
<gene>
    <name evidence="1" type="primary">mrnC</name>
    <name type="ordered locus">lmo0240</name>
</gene>
<organism>
    <name type="scientific">Listeria monocytogenes serovar 1/2a (strain ATCC BAA-679 / EGD-e)</name>
    <dbReference type="NCBI Taxonomy" id="169963"/>
    <lineage>
        <taxon>Bacteria</taxon>
        <taxon>Bacillati</taxon>
        <taxon>Bacillota</taxon>
        <taxon>Bacilli</taxon>
        <taxon>Bacillales</taxon>
        <taxon>Listeriaceae</taxon>
        <taxon>Listeria</taxon>
    </lineage>
</organism>
<reference key="1">
    <citation type="journal article" date="2001" name="Science">
        <title>Comparative genomics of Listeria species.</title>
        <authorList>
            <person name="Glaser P."/>
            <person name="Frangeul L."/>
            <person name="Buchrieser C."/>
            <person name="Rusniok C."/>
            <person name="Amend A."/>
            <person name="Baquero F."/>
            <person name="Berche P."/>
            <person name="Bloecker H."/>
            <person name="Brandt P."/>
            <person name="Chakraborty T."/>
            <person name="Charbit A."/>
            <person name="Chetouani F."/>
            <person name="Couve E."/>
            <person name="de Daruvar A."/>
            <person name="Dehoux P."/>
            <person name="Domann E."/>
            <person name="Dominguez-Bernal G."/>
            <person name="Duchaud E."/>
            <person name="Durant L."/>
            <person name="Dussurget O."/>
            <person name="Entian K.-D."/>
            <person name="Fsihi H."/>
            <person name="Garcia-del Portillo F."/>
            <person name="Garrido P."/>
            <person name="Gautier L."/>
            <person name="Goebel W."/>
            <person name="Gomez-Lopez N."/>
            <person name="Hain T."/>
            <person name="Hauf J."/>
            <person name="Jackson D."/>
            <person name="Jones L.-M."/>
            <person name="Kaerst U."/>
            <person name="Kreft J."/>
            <person name="Kuhn M."/>
            <person name="Kunst F."/>
            <person name="Kurapkat G."/>
            <person name="Madueno E."/>
            <person name="Maitournam A."/>
            <person name="Mata Vicente J."/>
            <person name="Ng E."/>
            <person name="Nedjari H."/>
            <person name="Nordsiek G."/>
            <person name="Novella S."/>
            <person name="de Pablos B."/>
            <person name="Perez-Diaz J.-C."/>
            <person name="Purcell R."/>
            <person name="Remmel B."/>
            <person name="Rose M."/>
            <person name="Schlueter T."/>
            <person name="Simoes N."/>
            <person name="Tierrez A."/>
            <person name="Vazquez-Boland J.-A."/>
            <person name="Voss H."/>
            <person name="Wehland J."/>
            <person name="Cossart P."/>
        </authorList>
    </citation>
    <scope>NUCLEOTIDE SEQUENCE [LARGE SCALE GENOMIC DNA]</scope>
    <source>
        <strain>ATCC BAA-679 / EGD-e</strain>
    </source>
</reference>
<dbReference type="EC" id="3.1.26.-" evidence="1"/>
<dbReference type="EMBL" id="AL591974">
    <property type="protein sequence ID" value="CAD00767.1"/>
    <property type="molecule type" value="Genomic_DNA"/>
</dbReference>
<dbReference type="PIR" id="AI1104">
    <property type="entry name" value="AI1104"/>
</dbReference>
<dbReference type="RefSeq" id="NP_463771.1">
    <property type="nucleotide sequence ID" value="NC_003210.1"/>
</dbReference>
<dbReference type="RefSeq" id="WP_009930887.1">
    <property type="nucleotide sequence ID" value="NZ_CP149495.1"/>
</dbReference>
<dbReference type="SMR" id="Q8YAB0"/>
<dbReference type="STRING" id="169963.gene:17592891"/>
<dbReference type="PaxDb" id="169963-lmo0240"/>
<dbReference type="EnsemblBacteria" id="CAD00767">
    <property type="protein sequence ID" value="CAD00767"/>
    <property type="gene ID" value="CAD00767"/>
</dbReference>
<dbReference type="GeneID" id="987262"/>
<dbReference type="KEGG" id="lmo:lmo0240"/>
<dbReference type="PATRIC" id="fig|169963.11.peg.248"/>
<dbReference type="eggNOG" id="COG1939">
    <property type="taxonomic scope" value="Bacteria"/>
</dbReference>
<dbReference type="HOGENOM" id="CLU_091169_2_0_9"/>
<dbReference type="OrthoDB" id="46571at2"/>
<dbReference type="PhylomeDB" id="Q8YAB0"/>
<dbReference type="BioCyc" id="LMON169963:LMO0240-MONOMER"/>
<dbReference type="Proteomes" id="UP000000817">
    <property type="component" value="Chromosome"/>
</dbReference>
<dbReference type="GO" id="GO:0005737">
    <property type="term" value="C:cytoplasm"/>
    <property type="evidence" value="ECO:0007669"/>
    <property type="project" value="UniProtKB-SubCell"/>
</dbReference>
<dbReference type="GO" id="GO:0004525">
    <property type="term" value="F:ribonuclease III activity"/>
    <property type="evidence" value="ECO:0007669"/>
    <property type="project" value="InterPro"/>
</dbReference>
<dbReference type="GO" id="GO:0019843">
    <property type="term" value="F:rRNA binding"/>
    <property type="evidence" value="ECO:0007669"/>
    <property type="project" value="UniProtKB-UniRule"/>
</dbReference>
<dbReference type="GO" id="GO:0006364">
    <property type="term" value="P:rRNA processing"/>
    <property type="evidence" value="ECO:0007669"/>
    <property type="project" value="UniProtKB-UniRule"/>
</dbReference>
<dbReference type="CDD" id="cd00593">
    <property type="entry name" value="RIBOc"/>
    <property type="match status" value="1"/>
</dbReference>
<dbReference type="Gene3D" id="1.10.1520.10">
    <property type="entry name" value="Ribonuclease III domain"/>
    <property type="match status" value="1"/>
</dbReference>
<dbReference type="HAMAP" id="MF_01468">
    <property type="entry name" value="RNase_Mini_III"/>
    <property type="match status" value="1"/>
</dbReference>
<dbReference type="InterPro" id="IPR008226">
    <property type="entry name" value="Mini3_fam"/>
</dbReference>
<dbReference type="InterPro" id="IPR000999">
    <property type="entry name" value="RNase_III_dom"/>
</dbReference>
<dbReference type="InterPro" id="IPR036389">
    <property type="entry name" value="RNase_III_sf"/>
</dbReference>
<dbReference type="PANTHER" id="PTHR34276">
    <property type="entry name" value="MINI-RIBONUCLEASE 3"/>
    <property type="match status" value="1"/>
</dbReference>
<dbReference type="PANTHER" id="PTHR34276:SF1">
    <property type="entry name" value="MINI-RIBONUCLEASE 3"/>
    <property type="match status" value="1"/>
</dbReference>
<dbReference type="Pfam" id="PF00636">
    <property type="entry name" value="Ribonuclease_3"/>
    <property type="match status" value="1"/>
</dbReference>
<dbReference type="PIRSF" id="PIRSF005520">
    <property type="entry name" value="UCP005520"/>
    <property type="match status" value="1"/>
</dbReference>
<dbReference type="SMART" id="SM00535">
    <property type="entry name" value="RIBOc"/>
    <property type="match status" value="1"/>
</dbReference>
<dbReference type="SUPFAM" id="SSF69065">
    <property type="entry name" value="RNase III domain-like"/>
    <property type="match status" value="1"/>
</dbReference>